<evidence type="ECO:0000250" key="1">
    <source>
        <dbReference type="UniProtKB" id="P03314"/>
    </source>
</evidence>
<evidence type="ECO:0000250" key="2">
    <source>
        <dbReference type="UniProtKB" id="P14336"/>
    </source>
</evidence>
<evidence type="ECO:0000250" key="3">
    <source>
        <dbReference type="UniProtKB" id="P17763"/>
    </source>
</evidence>
<evidence type="ECO:0000250" key="4">
    <source>
        <dbReference type="UniProtKB" id="P29990"/>
    </source>
</evidence>
<evidence type="ECO:0000250" key="5">
    <source>
        <dbReference type="UniProtKB" id="Q9Q6P4"/>
    </source>
</evidence>
<evidence type="ECO:0000255" key="6"/>
<evidence type="ECO:0000305" key="7"/>
<protein>
    <recommendedName>
        <fullName>Genome polyprotein</fullName>
    </recommendedName>
    <component>
        <recommendedName>
            <fullName>Capsid protein C</fullName>
        </recommendedName>
        <alternativeName>
            <fullName>Core protein</fullName>
        </alternativeName>
    </component>
    <component>
        <recommendedName>
            <fullName>Protein prM</fullName>
        </recommendedName>
    </component>
    <component>
        <recommendedName>
            <fullName>Peptide pr</fullName>
        </recommendedName>
    </component>
    <component>
        <recommendedName>
            <fullName>Small envelope protein M</fullName>
        </recommendedName>
        <alternativeName>
            <fullName>Matrix protein</fullName>
        </alternativeName>
    </component>
    <component>
        <recommendedName>
            <fullName>Envelope protein E</fullName>
        </recommendedName>
    </component>
    <component>
        <recommendedName>
            <fullName>Non-structural protein 1</fullName>
            <shortName>NS1</shortName>
        </recommendedName>
    </component>
    <component>
        <recommendedName>
            <fullName>Non-structural protein 2A</fullName>
            <shortName>NS2A</shortName>
        </recommendedName>
    </component>
</protein>
<accession>P29165</accession>
<name>POLG_YEFV8</name>
<organismHost>
    <name type="scientific">Aedes aegypti</name>
    <name type="common">Yellowfever mosquito</name>
    <name type="synonym">Culex aegypti</name>
    <dbReference type="NCBI Taxonomy" id="7159"/>
</organismHost>
<organismHost>
    <name type="scientific">Aedes luteocephalus</name>
    <name type="common">Mosquito</name>
    <dbReference type="NCBI Taxonomy" id="299629"/>
</organismHost>
<organismHost>
    <name type="scientific">Aedes simpsoni</name>
    <dbReference type="NCBI Taxonomy" id="7161"/>
</organismHost>
<organismHost>
    <name type="scientific">Homo sapiens</name>
    <name type="common">Human</name>
    <dbReference type="NCBI Taxonomy" id="9606"/>
</organismHost>
<organismHost>
    <name type="scientific">Simiiformes</name>
    <dbReference type="NCBI Taxonomy" id="314293"/>
</organismHost>
<sequence length="1163" mass="128521">MSGRKAQGKTLGVNMVRQGVRSLSNKIKQKTKQIGNRPGPSRGVQGFIFFFLFNVLTGRKITAHLKKLWRMLDPRQGLAVLKKVKRVVASLMRGLSSRKRRSYEVLTVQFLILGMLLMTGGVTLVRKSRWLLLNVTSEDLGKTFSVGTGNCTTNILEAKNWCPDSMEYNCPNLSPREEPDDIDCWCYGVENVRVAYGKCDSAGRSRRSRRAIDLPTHENHGLKTRQEKWMTGRMGERQLQKIERWLVRNPFFAVTALAIAYLVGSNMTQRVVIALLVLAVGPAYSAHCIGITDRDFIEGVHGGTWVSATLEQDKCVTVMAPDKPSLDISLETVAIDGPAEARKVCYSAVLTHVKINDKCPSTGEAHLAEENEGDHACKRTYSDRGWGNGCGLFGKGSIVACAKFTCAKSMSLFEVDQTKIQYVIRAQLHVGAKQENWNADIKTLKFDALSGSQEAEFTGYGKATLECQVQTAVDFSNSYIAEMEKESWIVDRQWAQDLTLPWQSGSGGVWREMHHLVEFEPPHAATIKVLALGNQEGSLKTALTGAMRVTKDTNGSNLYKLHGGHVSCRVKLSALTLKGTSYKMCTDKMSFVKNPTDTGHGTAVMQVKVPKGAPCRIPVMVADDLTASVNKGILVTVNPIASTNEDEVLIEVNPPFGDSYIIVGTGDSRLTYQWHKEGSSIGKLFTQTMKGAERLAVMGDAAWDFSSAGGFFTSVGKGIHMVFGSAFQGLFGGLSWITKVIMGAVLIWVGINMRNMTMSMSMILVGVIMMFLSLGVGADQGCAINFGKRELKCGDGVFIFRDSDDWLNKYSYYPEDPVKLASIVKASFEEGKCGLNSVDSLEHEMWRSRADEINAILEENEVDISVVVQDPKNIYQRGTHPFSRIRDGLQYGWKTWGKNLVFSPGRKNGSFIIDGKSRKECPFSNRVWNSLQIEEFGTGVFTTRVYMDAVFEYTMDCDGSILGAAVNGKKSAHGSPTFWMGSHEVNGTWMIHTLETLDYKECEWPLTHTIGTSVEESDMFMPRSIGGPVSSHNHIPGYKVQTNGPWMQVPLEVKREACPGTSVVVDGGCDGRGKSTRSTTDSGKIIPEWCCRSCTMPPVSFHGSDGCWYPMEIRPRKTHDNHLVRSWVTAGEVHAVPFGLVSMMIAMEVFLKKRQGPKQILVG</sequence>
<keyword id="KW-0067">ATP-binding</keyword>
<keyword id="KW-0167">Capsid protein</keyword>
<keyword id="KW-1165">Clathrin-mediated endocytosis of virus by host</keyword>
<keyword id="KW-0165">Cleavage on pair of basic residues</keyword>
<keyword id="KW-1015">Disulfide bond</keyword>
<keyword id="KW-1170">Fusion of virus membrane with host endosomal membrane</keyword>
<keyword id="KW-1168">Fusion of virus membrane with host membrane</keyword>
<keyword id="KW-0325">Glycoprotein</keyword>
<keyword id="KW-0347">Helicase</keyword>
<keyword id="KW-1035">Host cytoplasm</keyword>
<keyword id="KW-1038">Host endoplasmic reticulum</keyword>
<keyword id="KW-1043">Host membrane</keyword>
<keyword id="KW-1048">Host nucleus</keyword>
<keyword id="KW-0945">Host-virus interaction</keyword>
<keyword id="KW-0378">Hydrolase</keyword>
<keyword id="KW-1090">Inhibition of host innate immune response by virus</keyword>
<keyword id="KW-0472">Membrane</keyword>
<keyword id="KW-0547">Nucleotide-binding</keyword>
<keyword id="KW-0964">Secreted</keyword>
<keyword id="KW-0941">Suppressor of RNA silencing</keyword>
<keyword id="KW-0812">Transmembrane</keyword>
<keyword id="KW-1133">Transmembrane helix</keyword>
<keyword id="KW-1161">Viral attachment to host cell</keyword>
<keyword id="KW-0261">Viral envelope protein</keyword>
<keyword id="KW-0899">Viral immunoevasion</keyword>
<keyword id="KW-1162">Viral penetration into host cytoplasm</keyword>
<keyword id="KW-0946">Virion</keyword>
<keyword id="KW-1164">Virus endocytosis by host</keyword>
<keyword id="KW-1160">Virus entry into host cell</keyword>
<keyword id="KW-0862">Zinc</keyword>
<organism>
    <name type="scientific">Yellow fever virus (isolate Peru/1899/1981)</name>
    <name type="common">YFV</name>
    <dbReference type="NCBI Taxonomy" id="31641"/>
    <lineage>
        <taxon>Viruses</taxon>
        <taxon>Riboviria</taxon>
        <taxon>Orthornavirae</taxon>
        <taxon>Kitrinoviricota</taxon>
        <taxon>Flasuviricetes</taxon>
        <taxon>Amarillovirales</taxon>
        <taxon>Flaviviridae</taxon>
        <taxon>Orthoflavivirus</taxon>
        <taxon>Orthoflavivirus flavi</taxon>
    </lineage>
</organism>
<reference key="1">
    <citation type="journal article" date="1990" name="J. Gen. Virol.">
        <title>Partial nucleotide sequence of South American yellow fever virus strain 1899/81: structural proteins and NS1.</title>
        <authorList>
            <person name="Ballinger-Crabtree M.E."/>
            <person name="Miller B.R."/>
        </authorList>
    </citation>
    <scope>NUCLEOTIDE SEQUENCE [GENOMIC RNA]</scope>
</reference>
<comment type="function">
    <molecule>Capsid protein C</molecule>
    <text evidence="3">Plays a role in virus budding by binding to the cell membrane and gathering the viral RNA into a nucleocapsid that forms the core of a mature virus particle. During virus entry, may induce genome penetration into the host cytoplasm after hemifusion induced by the surface proteins. Can migrate to the cell nucleus where it modulates host functions.</text>
</comment>
<comment type="function">
    <molecule>Capsid protein C</molecule>
    <text evidence="1">Inhibits RNA silencing by interfering with host Dicer.</text>
</comment>
<comment type="function">
    <molecule>Peptide pr</molecule>
    <text evidence="3">Prevents premature fusion activity of envelope proteins in trans-Golgi by binding to envelope protein E at pH6.0. After virion release in extracellular space, gets dissociated from E dimers.</text>
</comment>
<comment type="function">
    <molecule>Protein prM</molecule>
    <text evidence="3">Acts as a chaperone for envelope protein E during intracellular virion assembly by masking and inactivating envelope protein E fusion peptide. prM is the only viral peptide matured by host furin in the trans-Golgi network probably to avoid catastrophic activation of the viral fusion activity in acidic Golgi compartment prior to virion release. prM-E cleavage is inefficient, and many virions are only partially matured. These uncleaved prM would play a role in immune evasion.</text>
</comment>
<comment type="function">
    <molecule>Small envelope protein M</molecule>
    <text evidence="3">May play a role in virus budding. Exerts cytotoxic effects by activating a mitochondrial apoptotic pathway through M ectodomain. May display a viroporin activity.</text>
</comment>
<comment type="function">
    <molecule>Envelope protein E</molecule>
    <text evidence="3">Binds to host cell surface receptor and mediates fusion between viral and cellular membranes. Envelope protein is synthesized in the endoplasmic reticulum in the form of heterodimer with protein prM. They play a role in virion budding in the ER, and the newly formed immature particle is covered with 60 spikes composed of heterodimer between precursor prM and envelope protein E. The virion is transported to the Golgi apparatus where the low pH causes dissociation of PrM-E heterodimers and formation of E homodimers. prM-E cleavage is inefficient, and many virions are only partially matured. These uncleaved prM would play a role in immune evasion.</text>
</comment>
<comment type="function">
    <molecule>Non-structural protein 1</molecule>
    <text evidence="5">Involved in immune evasion, pathogenesis and viral replication. Once cleaved off the polyprotein, is targeted to three destinations: the viral replication cycle, the plasma membrane and the extracellular compartment. Essential for viral replication. Required for formation of the replication complex and recruitment of other non-structural proteins to the ER-derived membrane structures. Excreted as a hexameric lipoparticle that plays a role against host immune response. Antagonizing the complement function. Binds to the host macrophages and dendritic cells. Inhibits signal transduction originating from Toll-like receptor 3 (TLR3).</text>
</comment>
<comment type="function">
    <molecule>Non-structural protein 2A</molecule>
    <text evidence="3">Component of the viral RNA replication complex that functions in virion assembly and antagonizes the host immune response.</text>
</comment>
<comment type="subunit">
    <molecule>Capsid protein C</molecule>
    <text evidence="3">Homodimer (By similarity). Interacts (via N-terminus) with host EXOC1 (via C-terminus); this interaction results in EXOC1 degradation through the proteasome degradation pathway (By similarity).</text>
</comment>
<comment type="subunit">
    <molecule>Protein prM</molecule>
    <text evidence="3">Forms heterodimers with envelope protein E in the endoplasmic reticulum and Golgi (By similarity).</text>
</comment>
<comment type="subunit">
    <molecule>Envelope protein E</molecule>
    <text evidence="3">Homodimer; in the endoplasmic reticulum and Golgi (By similarity).</text>
</comment>
<comment type="subunit">
    <molecule>Non-structural protein 1</molecule>
    <text evidence="3">Homodimer; Homohexamer when secreted. Interacts with envelope protein E (By similarity).</text>
</comment>
<comment type="subcellular location">
    <molecule>Capsid protein C</molecule>
    <subcellularLocation>
        <location evidence="3">Virion</location>
    </subcellularLocation>
    <subcellularLocation>
        <location evidence="3">Host nucleus</location>
    </subcellularLocation>
    <subcellularLocation>
        <location evidence="3">Host cytoplasm</location>
        <location evidence="3">Host perinuclear region</location>
    </subcellularLocation>
    <subcellularLocation>
        <location evidence="3">Host cytoplasm</location>
    </subcellularLocation>
</comment>
<comment type="subcellular location">
    <molecule>Peptide pr</molecule>
    <subcellularLocation>
        <location evidence="3">Secreted</location>
    </subcellularLocation>
</comment>
<comment type="subcellular location">
    <molecule>Small envelope protein M</molecule>
    <subcellularLocation>
        <location evidence="1">Virion membrane</location>
        <topology evidence="1">Multi-pass membrane protein</topology>
    </subcellularLocation>
    <subcellularLocation>
        <location evidence="1">Host endoplasmic reticulum membrane</location>
        <topology evidence="6">Multi-pass membrane protein</topology>
    </subcellularLocation>
    <text evidence="1">ER membrane retention is mediated by the transmembrane domains.</text>
</comment>
<comment type="subcellular location">
    <molecule>Envelope protein E</molecule>
    <subcellularLocation>
        <location evidence="7">Virion membrane</location>
        <topology evidence="1">Multi-pass membrane protein</topology>
    </subcellularLocation>
    <subcellularLocation>
        <location evidence="1">Host endoplasmic reticulum membrane</location>
        <topology evidence="6">Multi-pass membrane protein</topology>
    </subcellularLocation>
    <text evidence="1">ER membrane retention is mediated by the transmembrane domains.</text>
</comment>
<comment type="subcellular location">
    <molecule>Non-structural protein 1</molecule>
    <subcellularLocation>
        <location evidence="3">Secreted</location>
    </subcellularLocation>
    <subcellularLocation>
        <location>Host endoplasmic reticulum membrane</location>
        <topology>Peripheral membrane protein</topology>
        <orientation evidence="3">Lumenal side</orientation>
    </subcellularLocation>
    <text evidence="5">Located in RE-derived vesicles hosting the replication complex.</text>
</comment>
<comment type="subcellular location">
    <molecule>Non-structural protein 2A</molecule>
    <subcellularLocation>
        <location evidence="3">Host endoplasmic reticulum membrane</location>
        <topology evidence="3">Multi-pass membrane protein</topology>
    </subcellularLocation>
</comment>
<comment type="domain">
    <text evidence="3">The transmembrane domains of the small envelope protein M and envelope protein E contain an endoplasmic reticulum retention signal.</text>
</comment>
<comment type="PTM">
    <molecule>Genome polyprotein</molecule>
    <text evidence="1">Specific enzymatic cleavages in vivo yield mature proteins. The nascent capsid protein C contains a C-terminal hydrophobic domain that act as a signal sequence for translocation of prM into the lumen of the ER. Mature capsid protein C is cleaved at a site upstream of this hydrophobic domain by NS3. prM is cleaved in post-Golgi vesicles by a host furin, releasing the mature small envelope protein M, and peptide pr. Non-structural protein 2A-alpha, a C-terminally truncated form of non-structural protein 2A, results from partial cleavage by NS3. Specific enzymatic cleavages in vivo yield mature proteins peptide 2K acts as a signal sequence and is removed from the N-terminus of NS4B by the host signal peptidase in the ER lumen. Signal cleavage at the 2K-4B site requires a prior NS3 protease-mediated cleavage at the 4A-2K site.</text>
</comment>
<comment type="PTM">
    <molecule>Protein prM</molecule>
    <text evidence="3">Cleaved in post-Golgi vesicles by a host furin, releasing the mature small envelope protein M, and peptide pr. This cleavage is incomplete as up to 30% of viral particles still carry uncleaved prM.</text>
</comment>
<comment type="PTM">
    <molecule>Envelope protein E</molecule>
    <text evidence="3">N-glycosylated.</text>
</comment>
<comment type="PTM">
    <molecule>Non-structural protein 1</molecule>
    <text evidence="3">N-glycosylated. The excreted form is glycosylated and this is required for efficient secretion of the protein from infected cells.</text>
</comment>
<feature type="chain" id="PRO_0000405154" description="Genome polyprotein">
    <location>
        <begin position="1"/>
        <end position="1163" status="greater than"/>
    </location>
</feature>
<feature type="chain" id="PRO_0000037776" description="Capsid protein C" evidence="1">
    <location>
        <begin position="1"/>
        <end position="101"/>
    </location>
</feature>
<feature type="propeptide" id="PRO_0000037777" description="ER anchor for the capsid protein C, removed in mature form by serine protease NS3" evidence="1">
    <location>
        <begin position="102"/>
        <end position="121"/>
    </location>
</feature>
<feature type="chain" id="PRO_0000261453" description="Protein prM" evidence="4">
    <location>
        <begin position="122"/>
        <end position="285"/>
    </location>
</feature>
<feature type="chain" id="PRO_0000261454" description="Peptide pr" evidence="4">
    <location>
        <begin position="122"/>
        <end position="210"/>
    </location>
</feature>
<feature type="chain" id="PRO_0000037778" description="Small envelope protein M" evidence="4">
    <location>
        <begin position="211"/>
        <end position="285"/>
    </location>
</feature>
<feature type="chain" id="PRO_0000037779" description="Envelope protein E" evidence="4">
    <location>
        <begin position="286"/>
        <end position="778"/>
    </location>
</feature>
<feature type="chain" id="PRO_0000037780" description="Non-structural protein 1" evidence="1">
    <location>
        <begin position="779"/>
        <end position="1130"/>
    </location>
</feature>
<feature type="chain" id="PRO_0000037781" description="Non-structural protein 2A" evidence="4">
    <location>
        <begin position="1131"/>
        <end position="1163" status="greater than"/>
    </location>
</feature>
<feature type="topological domain" description="Cytoplasmic" evidence="6">
    <location>
        <begin position="1"/>
        <end position="104"/>
    </location>
</feature>
<feature type="transmembrane region" description="Helical" evidence="6">
    <location>
        <begin position="105"/>
        <end position="125"/>
    </location>
</feature>
<feature type="topological domain" description="Extracellular" evidence="6">
    <location>
        <begin position="126"/>
        <end position="244"/>
    </location>
</feature>
<feature type="transmembrane region" description="Helical" evidence="6">
    <location>
        <begin position="245"/>
        <end position="265"/>
    </location>
</feature>
<feature type="topological domain" description="Cytoplasmic" evidence="6">
    <location>
        <begin position="266"/>
        <end position="270"/>
    </location>
</feature>
<feature type="transmembrane region" description="Helical" evidence="7">
    <location>
        <begin position="271"/>
        <end position="285"/>
    </location>
</feature>
<feature type="topological domain" description="Extracellular" evidence="6">
    <location>
        <begin position="286"/>
        <end position="730"/>
    </location>
</feature>
<feature type="transmembrane region" description="Helical" evidence="6">
    <location>
        <begin position="731"/>
        <end position="751"/>
    </location>
</feature>
<feature type="topological domain" description="Extracellular" evidence="6">
    <location>
        <begin position="752"/>
        <end position="757"/>
    </location>
</feature>
<feature type="transmembrane region" description="Helical" evidence="6">
    <location>
        <begin position="758"/>
        <end position="778"/>
    </location>
</feature>
<feature type="topological domain" description="Extracellular" evidence="6">
    <location>
        <begin position="779"/>
        <end position="1163" status="greater than"/>
    </location>
</feature>
<feature type="region of interest" description="Hydrophobic; homodimerization of capsid protein C" evidence="4">
    <location>
        <begin position="38"/>
        <end position="72"/>
    </location>
</feature>
<feature type="region of interest" description="Fusion peptide" evidence="2">
    <location>
        <begin position="383"/>
        <end position="396"/>
    </location>
</feature>
<feature type="site" description="Cleavage; by viral protease NS3" evidence="1">
    <location>
        <begin position="101"/>
        <end position="102"/>
    </location>
</feature>
<feature type="site" description="Cleavage; by host signal peptidase" evidence="1">
    <location>
        <begin position="121"/>
        <end position="122"/>
    </location>
</feature>
<feature type="site" description="Cleavage; by host furin" evidence="4">
    <location>
        <begin position="210"/>
        <end position="211"/>
    </location>
</feature>
<feature type="site" description="Cleavage; by host signal peptidase" evidence="4">
    <location>
        <begin position="285"/>
        <end position="286"/>
    </location>
</feature>
<feature type="site" description="Cleavage; by host signal peptidase" evidence="1">
    <location>
        <begin position="778"/>
        <end position="779"/>
    </location>
</feature>
<feature type="site" description="Cleavage; by host" evidence="4">
    <location>
        <begin position="1130"/>
        <end position="1131"/>
    </location>
</feature>
<feature type="glycosylation site" description="N-linked (GlcNAc...) asparagine; by host" evidence="6">
    <location>
        <position position="134"/>
    </location>
</feature>
<feature type="glycosylation site" description="N-linked (GlcNAc...) asparagine; by host" evidence="6">
    <location>
        <position position="150"/>
    </location>
</feature>
<feature type="glycosylation site" description="N-linked (GlcNAc...) asparagine; by host" evidence="6">
    <location>
        <position position="908"/>
    </location>
</feature>
<feature type="glycosylation site" description="N-linked (GlcNAc...) asparagine; by host" evidence="6">
    <location>
        <position position="986"/>
    </location>
</feature>
<feature type="disulfide bond" evidence="3">
    <location>
        <begin position="288"/>
        <end position="315"/>
    </location>
</feature>
<feature type="disulfide bond" evidence="3">
    <location>
        <begin position="345"/>
        <end position="406"/>
    </location>
</feature>
<feature type="disulfide bond" evidence="3">
    <location>
        <begin position="359"/>
        <end position="390"/>
    </location>
</feature>
<feature type="disulfide bond" evidence="3">
    <location>
        <begin position="377"/>
        <end position="401"/>
    </location>
</feature>
<feature type="disulfide bond" evidence="3">
    <location>
        <begin position="467"/>
        <end position="568"/>
    </location>
</feature>
<feature type="disulfide bond" evidence="3">
    <location>
        <begin position="585"/>
        <end position="615"/>
    </location>
</feature>
<feature type="disulfide bond" evidence="3">
    <location>
        <begin position="782"/>
        <end position="793"/>
    </location>
</feature>
<feature type="disulfide bond" evidence="3">
    <location>
        <begin position="833"/>
        <end position="921"/>
    </location>
</feature>
<feature type="disulfide bond" evidence="3">
    <location>
        <begin position="957"/>
        <end position="1002"/>
    </location>
</feature>
<feature type="disulfide bond" evidence="3">
    <location>
        <begin position="1058"/>
        <end position="1107"/>
    </location>
</feature>
<feature type="disulfide bond" evidence="3">
    <location>
        <begin position="1069"/>
        <end position="1091"/>
    </location>
</feature>
<feature type="disulfide bond" evidence="3">
    <location>
        <begin position="1090"/>
        <end position="1094"/>
    </location>
</feature>
<feature type="non-terminal residue">
    <location>
        <position position="1163"/>
    </location>
</feature>
<dbReference type="EMBL" id="D14458">
    <property type="protein sequence ID" value="BAA03355.1"/>
    <property type="molecule type" value="Genomic_RNA"/>
</dbReference>
<dbReference type="PIR" id="JU0374">
    <property type="entry name" value="GNWVY8"/>
</dbReference>
<dbReference type="SMR" id="P29165"/>
<dbReference type="GO" id="GO:0005576">
    <property type="term" value="C:extracellular region"/>
    <property type="evidence" value="ECO:0007669"/>
    <property type="project" value="UniProtKB-SubCell"/>
</dbReference>
<dbReference type="GO" id="GO:0044167">
    <property type="term" value="C:host cell endoplasmic reticulum membrane"/>
    <property type="evidence" value="ECO:0007669"/>
    <property type="project" value="UniProtKB-SubCell"/>
</dbReference>
<dbReference type="GO" id="GO:0042025">
    <property type="term" value="C:host cell nucleus"/>
    <property type="evidence" value="ECO:0007669"/>
    <property type="project" value="UniProtKB-SubCell"/>
</dbReference>
<dbReference type="GO" id="GO:0044220">
    <property type="term" value="C:host cell perinuclear region of cytoplasm"/>
    <property type="evidence" value="ECO:0007669"/>
    <property type="project" value="UniProtKB-SubCell"/>
</dbReference>
<dbReference type="GO" id="GO:0016020">
    <property type="term" value="C:membrane"/>
    <property type="evidence" value="ECO:0007669"/>
    <property type="project" value="UniProtKB-KW"/>
</dbReference>
<dbReference type="GO" id="GO:0019028">
    <property type="term" value="C:viral capsid"/>
    <property type="evidence" value="ECO:0007669"/>
    <property type="project" value="UniProtKB-KW"/>
</dbReference>
<dbReference type="GO" id="GO:0019031">
    <property type="term" value="C:viral envelope"/>
    <property type="evidence" value="ECO:0007669"/>
    <property type="project" value="UniProtKB-KW"/>
</dbReference>
<dbReference type="GO" id="GO:0055036">
    <property type="term" value="C:virion membrane"/>
    <property type="evidence" value="ECO:0007669"/>
    <property type="project" value="UniProtKB-SubCell"/>
</dbReference>
<dbReference type="GO" id="GO:0005524">
    <property type="term" value="F:ATP binding"/>
    <property type="evidence" value="ECO:0007669"/>
    <property type="project" value="UniProtKB-KW"/>
</dbReference>
<dbReference type="GO" id="GO:0004386">
    <property type="term" value="F:helicase activity"/>
    <property type="evidence" value="ECO:0007669"/>
    <property type="project" value="UniProtKB-KW"/>
</dbReference>
<dbReference type="GO" id="GO:0016787">
    <property type="term" value="F:hydrolase activity"/>
    <property type="evidence" value="ECO:0007669"/>
    <property type="project" value="UniProtKB-KW"/>
</dbReference>
<dbReference type="GO" id="GO:0046983">
    <property type="term" value="F:protein dimerization activity"/>
    <property type="evidence" value="ECO:0007669"/>
    <property type="project" value="InterPro"/>
</dbReference>
<dbReference type="GO" id="GO:0005198">
    <property type="term" value="F:structural molecule activity"/>
    <property type="evidence" value="ECO:0007669"/>
    <property type="project" value="InterPro"/>
</dbReference>
<dbReference type="GO" id="GO:0075512">
    <property type="term" value="P:clathrin-dependent endocytosis of virus by host cell"/>
    <property type="evidence" value="ECO:0007669"/>
    <property type="project" value="UniProtKB-KW"/>
</dbReference>
<dbReference type="GO" id="GO:0039654">
    <property type="term" value="P:fusion of virus membrane with host endosome membrane"/>
    <property type="evidence" value="ECO:0007669"/>
    <property type="project" value="UniProtKB-KW"/>
</dbReference>
<dbReference type="GO" id="GO:0052170">
    <property type="term" value="P:symbiont-mediated suppression of host innate immune response"/>
    <property type="evidence" value="ECO:0007669"/>
    <property type="project" value="UniProtKB-KW"/>
</dbReference>
<dbReference type="GO" id="GO:0019062">
    <property type="term" value="P:virion attachment to host cell"/>
    <property type="evidence" value="ECO:0007669"/>
    <property type="project" value="UniProtKB-KW"/>
</dbReference>
<dbReference type="CDD" id="cd12149">
    <property type="entry name" value="Flavi_E_C"/>
    <property type="match status" value="1"/>
</dbReference>
<dbReference type="CDD" id="cd17038">
    <property type="entry name" value="Flavi_M"/>
    <property type="match status" value="1"/>
</dbReference>
<dbReference type="FunFam" id="1.20.1280.260:FF:000001">
    <property type="entry name" value="Envelope glycoprotein"/>
    <property type="match status" value="1"/>
</dbReference>
<dbReference type="FunFam" id="2.60.260.50:FF:000001">
    <property type="entry name" value="Genome polyprotein"/>
    <property type="match status" value="1"/>
</dbReference>
<dbReference type="Gene3D" id="1.10.10.930">
    <property type="match status" value="1"/>
</dbReference>
<dbReference type="Gene3D" id="1.20.1280.260">
    <property type="match status" value="1"/>
</dbReference>
<dbReference type="Gene3D" id="2.60.40.350">
    <property type="match status" value="1"/>
</dbReference>
<dbReference type="Gene3D" id="1.10.8.970">
    <property type="entry name" value="Flavivirus envelope glycoprotein M-like"/>
    <property type="match status" value="1"/>
</dbReference>
<dbReference type="Gene3D" id="2.60.260.50">
    <property type="entry name" value="Flavivirus polyprotein propeptide domain"/>
    <property type="match status" value="1"/>
</dbReference>
<dbReference type="Gene3D" id="2.60.98.10">
    <property type="entry name" value="Tick-borne Encephalitis virus Glycoprotein, domain 1"/>
    <property type="match status" value="1"/>
</dbReference>
<dbReference type="Gene3D" id="3.30.67.10">
    <property type="entry name" value="Viral Envelope Glycoprotein, domain 2"/>
    <property type="match status" value="1"/>
</dbReference>
<dbReference type="Gene3D" id="3.30.387.10">
    <property type="entry name" value="Viral Envelope Glycoprotein, domain 3"/>
    <property type="match status" value="1"/>
</dbReference>
<dbReference type="InterPro" id="IPR000069">
    <property type="entry name" value="Env_glycoprot_M_flavivir"/>
</dbReference>
<dbReference type="InterPro" id="IPR038302">
    <property type="entry name" value="Env_glycoprot_M_sf_flavivir"/>
</dbReference>
<dbReference type="InterPro" id="IPR013755">
    <property type="entry name" value="Flav_gly_cen_dom_subdom1"/>
</dbReference>
<dbReference type="InterPro" id="IPR001122">
    <property type="entry name" value="Flavi_capsidC"/>
</dbReference>
<dbReference type="InterPro" id="IPR037172">
    <property type="entry name" value="Flavi_capsidC_sf"/>
</dbReference>
<dbReference type="InterPro" id="IPR027287">
    <property type="entry name" value="Flavi_E_Ig-like"/>
</dbReference>
<dbReference type="InterPro" id="IPR026470">
    <property type="entry name" value="Flavi_E_Stem/Anchor_dom"/>
</dbReference>
<dbReference type="InterPro" id="IPR038345">
    <property type="entry name" value="Flavi_E_Stem/Anchor_dom_sf"/>
</dbReference>
<dbReference type="InterPro" id="IPR011998">
    <property type="entry name" value="Flavi_Glycoprot_E_cen/dimer"/>
</dbReference>
<dbReference type="InterPro" id="IPR001157">
    <property type="entry name" value="Flavi_NS1"/>
</dbReference>
<dbReference type="InterPro" id="IPR002535">
    <property type="entry name" value="Flavi_propep"/>
</dbReference>
<dbReference type="InterPro" id="IPR038688">
    <property type="entry name" value="Flavi_propep_sf"/>
</dbReference>
<dbReference type="InterPro" id="IPR000336">
    <property type="entry name" value="Flavivir/Alphavir_Ig-like_sf"/>
</dbReference>
<dbReference type="InterPro" id="IPR036253">
    <property type="entry name" value="Glycoprot_cen/dimer_sf"/>
</dbReference>
<dbReference type="InterPro" id="IPR038055">
    <property type="entry name" value="Glycoprot_E_dimer_dom"/>
</dbReference>
<dbReference type="InterPro" id="IPR013756">
    <property type="entry name" value="GlyE_cen_dom_subdom2"/>
</dbReference>
<dbReference type="InterPro" id="IPR014756">
    <property type="entry name" value="Ig_E-set"/>
</dbReference>
<dbReference type="NCBIfam" id="TIGR04240">
    <property type="entry name" value="flavi_E_stem"/>
    <property type="match status" value="1"/>
</dbReference>
<dbReference type="Pfam" id="PF01003">
    <property type="entry name" value="Flavi_capsid"/>
    <property type="match status" value="1"/>
</dbReference>
<dbReference type="Pfam" id="PF21659">
    <property type="entry name" value="Flavi_E_stem"/>
    <property type="match status" value="1"/>
</dbReference>
<dbReference type="Pfam" id="PF02832">
    <property type="entry name" value="Flavi_glycop_C"/>
    <property type="match status" value="1"/>
</dbReference>
<dbReference type="Pfam" id="PF00869">
    <property type="entry name" value="Flavi_glycoprot"/>
    <property type="match status" value="1"/>
</dbReference>
<dbReference type="Pfam" id="PF01004">
    <property type="entry name" value="Flavi_M"/>
    <property type="match status" value="1"/>
</dbReference>
<dbReference type="Pfam" id="PF00948">
    <property type="entry name" value="Flavi_NS1"/>
    <property type="match status" value="1"/>
</dbReference>
<dbReference type="Pfam" id="PF01570">
    <property type="entry name" value="Flavi_propep"/>
    <property type="match status" value="1"/>
</dbReference>
<dbReference type="SUPFAM" id="SSF81296">
    <property type="entry name" value="E set domains"/>
    <property type="match status" value="1"/>
</dbReference>
<dbReference type="SUPFAM" id="SSF56983">
    <property type="entry name" value="Viral glycoprotein, central and dimerisation domains"/>
    <property type="match status" value="1"/>
</dbReference>
<proteinExistence type="inferred from homology"/>